<comment type="function">
    <text evidence="1">Produces ATP from ADP in the presence of a proton gradient across the membrane. The catalytic sites are hosted primarily by the beta subunits.</text>
</comment>
<comment type="catalytic activity">
    <reaction evidence="1">
        <text>ATP + H2O + 4 H(+)(in) = ADP + phosphate + 5 H(+)(out)</text>
        <dbReference type="Rhea" id="RHEA:57720"/>
        <dbReference type="ChEBI" id="CHEBI:15377"/>
        <dbReference type="ChEBI" id="CHEBI:15378"/>
        <dbReference type="ChEBI" id="CHEBI:30616"/>
        <dbReference type="ChEBI" id="CHEBI:43474"/>
        <dbReference type="ChEBI" id="CHEBI:456216"/>
        <dbReference type="EC" id="7.1.2.2"/>
    </reaction>
</comment>
<comment type="subunit">
    <text evidence="1">F-type ATPases have 2 components, CF(1) - the catalytic core - and CF(0) - the membrane proton channel. CF(1) has five subunits: alpha(3), beta(3), gamma(1), delta(1), epsilon(1). CF(0) has three main subunits: a(1), b(2) and c(9-12). The alpha and beta chains form an alternating ring which encloses part of the gamma chain. CF(1) is attached to CF(0) by a central stalk formed by the gamma and epsilon chains, while a peripheral stalk is formed by the delta and b chains.</text>
</comment>
<comment type="subcellular location">
    <subcellularLocation>
        <location evidence="1">Cell inner membrane</location>
        <topology evidence="1">Peripheral membrane protein</topology>
    </subcellularLocation>
</comment>
<comment type="similarity">
    <text evidence="1">Belongs to the ATPase alpha/beta chains family.</text>
</comment>
<evidence type="ECO:0000255" key="1">
    <source>
        <dbReference type="HAMAP-Rule" id="MF_01347"/>
    </source>
</evidence>
<gene>
    <name evidence="1" type="primary">atpD</name>
    <name type="ordered locus">Hac_0582</name>
</gene>
<dbReference type="EC" id="7.1.2.2" evidence="1"/>
<dbReference type="EMBL" id="AM260522">
    <property type="protein sequence ID" value="CAJ99398.1"/>
    <property type="molecule type" value="Genomic_DNA"/>
</dbReference>
<dbReference type="RefSeq" id="WP_011577512.1">
    <property type="nucleotide sequence ID" value="NC_008229.1"/>
</dbReference>
<dbReference type="SMR" id="Q17Y78"/>
<dbReference type="STRING" id="382638.Hac_0582"/>
<dbReference type="GeneID" id="31758059"/>
<dbReference type="KEGG" id="hac:Hac_0582"/>
<dbReference type="eggNOG" id="COG0055">
    <property type="taxonomic scope" value="Bacteria"/>
</dbReference>
<dbReference type="HOGENOM" id="CLU_022398_0_2_7"/>
<dbReference type="OrthoDB" id="9801639at2"/>
<dbReference type="BioCyc" id="HACI382638:HAC_RS02575-MONOMER"/>
<dbReference type="Proteomes" id="UP000000775">
    <property type="component" value="Chromosome"/>
</dbReference>
<dbReference type="GO" id="GO:0005886">
    <property type="term" value="C:plasma membrane"/>
    <property type="evidence" value="ECO:0007669"/>
    <property type="project" value="UniProtKB-SubCell"/>
</dbReference>
<dbReference type="GO" id="GO:0045259">
    <property type="term" value="C:proton-transporting ATP synthase complex"/>
    <property type="evidence" value="ECO:0007669"/>
    <property type="project" value="UniProtKB-KW"/>
</dbReference>
<dbReference type="GO" id="GO:0005524">
    <property type="term" value="F:ATP binding"/>
    <property type="evidence" value="ECO:0007669"/>
    <property type="project" value="UniProtKB-UniRule"/>
</dbReference>
<dbReference type="GO" id="GO:0016887">
    <property type="term" value="F:ATP hydrolysis activity"/>
    <property type="evidence" value="ECO:0007669"/>
    <property type="project" value="InterPro"/>
</dbReference>
<dbReference type="GO" id="GO:0046933">
    <property type="term" value="F:proton-transporting ATP synthase activity, rotational mechanism"/>
    <property type="evidence" value="ECO:0007669"/>
    <property type="project" value="UniProtKB-UniRule"/>
</dbReference>
<dbReference type="CDD" id="cd18110">
    <property type="entry name" value="ATP-synt_F1_beta_C"/>
    <property type="match status" value="1"/>
</dbReference>
<dbReference type="CDD" id="cd18115">
    <property type="entry name" value="ATP-synt_F1_beta_N"/>
    <property type="match status" value="1"/>
</dbReference>
<dbReference type="CDD" id="cd01133">
    <property type="entry name" value="F1-ATPase_beta_CD"/>
    <property type="match status" value="1"/>
</dbReference>
<dbReference type="FunFam" id="1.10.1140.10:FF:000001">
    <property type="entry name" value="ATP synthase subunit beta"/>
    <property type="match status" value="1"/>
</dbReference>
<dbReference type="FunFam" id="3.40.50.300:FF:000004">
    <property type="entry name" value="ATP synthase subunit beta"/>
    <property type="match status" value="1"/>
</dbReference>
<dbReference type="Gene3D" id="2.40.10.170">
    <property type="match status" value="1"/>
</dbReference>
<dbReference type="Gene3D" id="1.10.1140.10">
    <property type="entry name" value="Bovine Mitochondrial F1-atpase, Atp Synthase Beta Chain, Chain D, domain 3"/>
    <property type="match status" value="1"/>
</dbReference>
<dbReference type="Gene3D" id="3.40.50.300">
    <property type="entry name" value="P-loop containing nucleotide triphosphate hydrolases"/>
    <property type="match status" value="1"/>
</dbReference>
<dbReference type="HAMAP" id="MF_01347">
    <property type="entry name" value="ATP_synth_beta_bact"/>
    <property type="match status" value="1"/>
</dbReference>
<dbReference type="InterPro" id="IPR003593">
    <property type="entry name" value="AAA+_ATPase"/>
</dbReference>
<dbReference type="InterPro" id="IPR055190">
    <property type="entry name" value="ATP-synt_VA_C"/>
</dbReference>
<dbReference type="InterPro" id="IPR005722">
    <property type="entry name" value="ATP_synth_F1_bsu"/>
</dbReference>
<dbReference type="InterPro" id="IPR020003">
    <property type="entry name" value="ATPase_a/bsu_AS"/>
</dbReference>
<dbReference type="InterPro" id="IPR050053">
    <property type="entry name" value="ATPase_alpha/beta_chains"/>
</dbReference>
<dbReference type="InterPro" id="IPR004100">
    <property type="entry name" value="ATPase_F1/V1/A1_a/bsu_N"/>
</dbReference>
<dbReference type="InterPro" id="IPR036121">
    <property type="entry name" value="ATPase_F1/V1/A1_a/bsu_N_sf"/>
</dbReference>
<dbReference type="InterPro" id="IPR000194">
    <property type="entry name" value="ATPase_F1/V1/A1_a/bsu_nucl-bd"/>
</dbReference>
<dbReference type="InterPro" id="IPR024034">
    <property type="entry name" value="ATPase_F1/V1_b/a_C"/>
</dbReference>
<dbReference type="InterPro" id="IPR027417">
    <property type="entry name" value="P-loop_NTPase"/>
</dbReference>
<dbReference type="NCBIfam" id="TIGR01039">
    <property type="entry name" value="atpD"/>
    <property type="match status" value="1"/>
</dbReference>
<dbReference type="PANTHER" id="PTHR15184">
    <property type="entry name" value="ATP SYNTHASE"/>
    <property type="match status" value="1"/>
</dbReference>
<dbReference type="PANTHER" id="PTHR15184:SF71">
    <property type="entry name" value="ATP SYNTHASE SUBUNIT BETA, MITOCHONDRIAL"/>
    <property type="match status" value="1"/>
</dbReference>
<dbReference type="Pfam" id="PF00006">
    <property type="entry name" value="ATP-synt_ab"/>
    <property type="match status" value="1"/>
</dbReference>
<dbReference type="Pfam" id="PF02874">
    <property type="entry name" value="ATP-synt_ab_N"/>
    <property type="match status" value="1"/>
</dbReference>
<dbReference type="Pfam" id="PF22919">
    <property type="entry name" value="ATP-synt_VA_C"/>
    <property type="match status" value="1"/>
</dbReference>
<dbReference type="SMART" id="SM00382">
    <property type="entry name" value="AAA"/>
    <property type="match status" value="1"/>
</dbReference>
<dbReference type="SUPFAM" id="SSF47917">
    <property type="entry name" value="C-terminal domain of alpha and beta subunits of F1 ATP synthase"/>
    <property type="match status" value="1"/>
</dbReference>
<dbReference type="SUPFAM" id="SSF50615">
    <property type="entry name" value="N-terminal domain of alpha and beta subunits of F1 ATP synthase"/>
    <property type="match status" value="1"/>
</dbReference>
<dbReference type="SUPFAM" id="SSF52540">
    <property type="entry name" value="P-loop containing nucleoside triphosphate hydrolases"/>
    <property type="match status" value="1"/>
</dbReference>
<dbReference type="PROSITE" id="PS00152">
    <property type="entry name" value="ATPASE_ALPHA_BETA"/>
    <property type="match status" value="1"/>
</dbReference>
<organism>
    <name type="scientific">Helicobacter acinonychis (strain Sheeba)</name>
    <dbReference type="NCBI Taxonomy" id="382638"/>
    <lineage>
        <taxon>Bacteria</taxon>
        <taxon>Pseudomonadati</taxon>
        <taxon>Campylobacterota</taxon>
        <taxon>Epsilonproteobacteria</taxon>
        <taxon>Campylobacterales</taxon>
        <taxon>Helicobacteraceae</taxon>
        <taxon>Helicobacter</taxon>
    </lineage>
</organism>
<sequence length="466" mass="51172">MEGKIIQVLGPVVDVEFESYLPAIFEALDINFEVNGVQKSLVLEVAAHLGGNRVRAIAMDMTEGLVRNQVVKARGKMIEVPVGEGVLGRIFNVVGESIDNLEPLKPSLIWPIHRKAPSFEQQSTKTEMFETGIKVIDLLAPYSKGGKVGLFGGAGVGKTVIIMELIHNVAYKHNGYSVFAGVGERTREGNDLYFEMKEGGVLDKVALCYGQMNEPPGARNRIAFTGLTMAEYFRDEKGLDVLMFIDNIFRYAQSGAEMSALLGRIPSAVGYQPTLAGEMGKLQERIASTKNGSITSVQAVYVPADDLTDPAPASVFAHLDATTVLNRKIAEKGIYPAVDPLDSTSRILSPQMIGEKHYEIATGIQQVLQKYKDLQDIIAILGLDELSEEDKKIVERARKIEKFLSQPFFVAEVFTGSPGKYVTLQETLEGFRGILEGKYDHIPENAFYMVGSIQEVLEKAKSMKNS</sequence>
<protein>
    <recommendedName>
        <fullName evidence="1">ATP synthase subunit beta</fullName>
        <ecNumber evidence="1">7.1.2.2</ecNumber>
    </recommendedName>
    <alternativeName>
        <fullName evidence="1">ATP synthase F1 sector subunit beta</fullName>
    </alternativeName>
    <alternativeName>
        <fullName evidence="1">F-ATPase subunit beta</fullName>
    </alternativeName>
</protein>
<accession>Q17Y78</accession>
<name>ATPB_HELAH</name>
<reference key="1">
    <citation type="journal article" date="2006" name="PLoS Genet.">
        <title>Who ate whom? Adaptive Helicobacter genomic changes that accompanied a host jump from early humans to large felines.</title>
        <authorList>
            <person name="Eppinger M."/>
            <person name="Baar C."/>
            <person name="Linz B."/>
            <person name="Raddatz G."/>
            <person name="Lanz C."/>
            <person name="Keller H."/>
            <person name="Morelli G."/>
            <person name="Gressmann H."/>
            <person name="Achtman M."/>
            <person name="Schuster S.C."/>
        </authorList>
    </citation>
    <scope>NUCLEOTIDE SEQUENCE [LARGE SCALE GENOMIC DNA]</scope>
    <source>
        <strain>Sheeba</strain>
    </source>
</reference>
<keyword id="KW-0066">ATP synthesis</keyword>
<keyword id="KW-0067">ATP-binding</keyword>
<keyword id="KW-0997">Cell inner membrane</keyword>
<keyword id="KW-1003">Cell membrane</keyword>
<keyword id="KW-0139">CF(1)</keyword>
<keyword id="KW-0375">Hydrogen ion transport</keyword>
<keyword id="KW-0406">Ion transport</keyword>
<keyword id="KW-0472">Membrane</keyword>
<keyword id="KW-0547">Nucleotide-binding</keyword>
<keyword id="KW-1278">Translocase</keyword>
<keyword id="KW-0813">Transport</keyword>
<proteinExistence type="inferred from homology"/>
<feature type="chain" id="PRO_0000339533" description="ATP synthase subunit beta">
    <location>
        <begin position="1"/>
        <end position="466"/>
    </location>
</feature>
<feature type="binding site" evidence="1">
    <location>
        <begin position="152"/>
        <end position="159"/>
    </location>
    <ligand>
        <name>ATP</name>
        <dbReference type="ChEBI" id="CHEBI:30616"/>
    </ligand>
</feature>